<protein>
    <recommendedName>
        <fullName>Acetylornithine aminotransferase, mitochondrial</fullName>
        <shortName>ACOAT</shortName>
        <ecNumber>2.6.1.11</ecNumber>
    </recommendedName>
</protein>
<organism>
    <name type="scientific">Candida glabrata (strain ATCC 2001 / BCRC 20586 / JCM 3761 / NBRC 0622 / NRRL Y-65 / CBS 138)</name>
    <name type="common">Yeast</name>
    <name type="synonym">Nakaseomyces glabratus</name>
    <dbReference type="NCBI Taxonomy" id="284593"/>
    <lineage>
        <taxon>Eukaryota</taxon>
        <taxon>Fungi</taxon>
        <taxon>Dikarya</taxon>
        <taxon>Ascomycota</taxon>
        <taxon>Saccharomycotina</taxon>
        <taxon>Saccharomycetes</taxon>
        <taxon>Saccharomycetales</taxon>
        <taxon>Saccharomycetaceae</taxon>
        <taxon>Nakaseomyces</taxon>
    </lineage>
</organism>
<accession>Q6FXA4</accession>
<reference key="1">
    <citation type="journal article" date="2004" name="Nature">
        <title>Genome evolution in yeasts.</title>
        <authorList>
            <person name="Dujon B."/>
            <person name="Sherman D."/>
            <person name="Fischer G."/>
            <person name="Durrens P."/>
            <person name="Casaregola S."/>
            <person name="Lafontaine I."/>
            <person name="de Montigny J."/>
            <person name="Marck C."/>
            <person name="Neuveglise C."/>
            <person name="Talla E."/>
            <person name="Goffard N."/>
            <person name="Frangeul L."/>
            <person name="Aigle M."/>
            <person name="Anthouard V."/>
            <person name="Babour A."/>
            <person name="Barbe V."/>
            <person name="Barnay S."/>
            <person name="Blanchin S."/>
            <person name="Beckerich J.-M."/>
            <person name="Beyne E."/>
            <person name="Bleykasten C."/>
            <person name="Boisrame A."/>
            <person name="Boyer J."/>
            <person name="Cattolico L."/>
            <person name="Confanioleri F."/>
            <person name="de Daruvar A."/>
            <person name="Despons L."/>
            <person name="Fabre E."/>
            <person name="Fairhead C."/>
            <person name="Ferry-Dumazet H."/>
            <person name="Groppi A."/>
            <person name="Hantraye F."/>
            <person name="Hennequin C."/>
            <person name="Jauniaux N."/>
            <person name="Joyet P."/>
            <person name="Kachouri R."/>
            <person name="Kerrest A."/>
            <person name="Koszul R."/>
            <person name="Lemaire M."/>
            <person name="Lesur I."/>
            <person name="Ma L."/>
            <person name="Muller H."/>
            <person name="Nicaud J.-M."/>
            <person name="Nikolski M."/>
            <person name="Oztas S."/>
            <person name="Ozier-Kalogeropoulos O."/>
            <person name="Pellenz S."/>
            <person name="Potier S."/>
            <person name="Richard G.-F."/>
            <person name="Straub M.-L."/>
            <person name="Suleau A."/>
            <person name="Swennen D."/>
            <person name="Tekaia F."/>
            <person name="Wesolowski-Louvel M."/>
            <person name="Westhof E."/>
            <person name="Wirth B."/>
            <person name="Zeniou-Meyer M."/>
            <person name="Zivanovic Y."/>
            <person name="Bolotin-Fukuhara M."/>
            <person name="Thierry A."/>
            <person name="Bouchier C."/>
            <person name="Caudron B."/>
            <person name="Scarpelli C."/>
            <person name="Gaillardin C."/>
            <person name="Weissenbach J."/>
            <person name="Wincker P."/>
            <person name="Souciet J.-L."/>
        </authorList>
    </citation>
    <scope>NUCLEOTIDE SEQUENCE [LARGE SCALE GENOMIC DNA]</scope>
    <source>
        <strain>ATCC 2001 / BCRC 20586 / JCM 3761 / NBRC 0622 / NRRL Y-65 / CBS 138</strain>
    </source>
</reference>
<proteinExistence type="inferred from homology"/>
<feature type="transit peptide" description="Mitochondrion" evidence="2">
    <location>
        <begin position="1"/>
        <end status="unknown"/>
    </location>
</feature>
<feature type="chain" id="PRO_0000002077" description="Acetylornithine aminotransferase, mitochondrial">
    <location>
        <begin status="unknown"/>
        <end position="427"/>
    </location>
</feature>
<feature type="modified residue" description="N6-(pyridoxal phosphate)lysine" evidence="1">
    <location>
        <position position="279"/>
    </location>
</feature>
<keyword id="KW-0028">Amino-acid biosynthesis</keyword>
<keyword id="KW-0032">Aminotransferase</keyword>
<keyword id="KW-0055">Arginine biosynthesis</keyword>
<keyword id="KW-0496">Mitochondrion</keyword>
<keyword id="KW-0663">Pyridoxal phosphate</keyword>
<keyword id="KW-1185">Reference proteome</keyword>
<keyword id="KW-0808">Transferase</keyword>
<keyword id="KW-0809">Transit peptide</keyword>
<comment type="catalytic activity">
    <reaction>
        <text>N(2)-acetyl-L-ornithine + 2-oxoglutarate = N-acetyl-L-glutamate 5-semialdehyde + L-glutamate</text>
        <dbReference type="Rhea" id="RHEA:18049"/>
        <dbReference type="ChEBI" id="CHEBI:16810"/>
        <dbReference type="ChEBI" id="CHEBI:29123"/>
        <dbReference type="ChEBI" id="CHEBI:29985"/>
        <dbReference type="ChEBI" id="CHEBI:57805"/>
        <dbReference type="EC" id="2.6.1.11"/>
    </reaction>
</comment>
<comment type="cofactor">
    <cofactor evidence="1">
        <name>pyridoxal 5'-phosphate</name>
        <dbReference type="ChEBI" id="CHEBI:597326"/>
    </cofactor>
</comment>
<comment type="pathway">
    <text>Amino-acid biosynthesis; L-arginine biosynthesis; N(2)-acetyl-L-ornithine from L-glutamate: step 4/4.</text>
</comment>
<comment type="subcellular location">
    <subcellularLocation>
        <location evidence="1">Mitochondrion matrix</location>
    </subcellularLocation>
</comment>
<comment type="similarity">
    <text evidence="3">Belongs to the class-III pyridoxal-phosphate-dependent aminotransferase family.</text>
</comment>
<name>ARGD_CANGA</name>
<gene>
    <name type="primary">ARG8</name>
    <name type="ordered locus">CAGL0B01507g</name>
</gene>
<sequence length="427" mass="46824">MYKRYFSTSLKTNQQALKKILEEKTYQVTTYARPSDLCITRGLNAKLFDDFNNKEYIDFTAGIAVTALGHANPKVAEILQTQATKLVHSSNLYFTKECLDLSEKLIEKTKKFGGQHDASKVFLCNSGTEANEAALKFAKKHGITKNPKKQGIIAFENSFHGRTMGALSVTWNKKYRTPFGDLVPHVSFLNINDELSKIKDFINTKKDEIAGLIIEPIQGEGGIFPIPIEKLVALKEICQKNDIIVIYDEIQCGLGRTGNLWAHAALPKAAHPDIFTSAKALGNGFPIAATVVNEKVNNALQVGDHGTTYGGNPLGCAVSNYVLDVIGDQAFLDSVTKKGELLKKGLLKIKEQHPDKISDVRGSGLIWGVEFKDAPGAIVQKARELGLLVITAGKTTVRFVPSLTIEDEVVEEGLTIFNKAVNDVFSK</sequence>
<dbReference type="EC" id="2.6.1.11"/>
<dbReference type="EMBL" id="CR380948">
    <property type="protein sequence ID" value="CAG57935.1"/>
    <property type="molecule type" value="Genomic_DNA"/>
</dbReference>
<dbReference type="RefSeq" id="XP_445035.1">
    <property type="nucleotide sequence ID" value="XM_445035.1"/>
</dbReference>
<dbReference type="SMR" id="Q6FXA4"/>
<dbReference type="FunCoup" id="Q6FXA4">
    <property type="interactions" value="316"/>
</dbReference>
<dbReference type="STRING" id="284593.Q6FXA4"/>
<dbReference type="EnsemblFungi" id="CAGL0B01507g-T">
    <property type="protein sequence ID" value="CAGL0B01507g-T-p1"/>
    <property type="gene ID" value="CAGL0B01507g"/>
</dbReference>
<dbReference type="GeneID" id="2886668"/>
<dbReference type="KEGG" id="cgr:2886668"/>
<dbReference type="CGD" id="CAL0127072">
    <property type="gene designation" value="ARG8"/>
</dbReference>
<dbReference type="VEuPathDB" id="FungiDB:B1J91_B01507g"/>
<dbReference type="VEuPathDB" id="FungiDB:CAGL0B01507g"/>
<dbReference type="eggNOG" id="KOG1401">
    <property type="taxonomic scope" value="Eukaryota"/>
</dbReference>
<dbReference type="HOGENOM" id="CLU_016922_10_1_1"/>
<dbReference type="InParanoid" id="Q6FXA4"/>
<dbReference type="OMA" id="MVPGFKY"/>
<dbReference type="UniPathway" id="UPA00068">
    <property type="reaction ID" value="UER00109"/>
</dbReference>
<dbReference type="Proteomes" id="UP000002428">
    <property type="component" value="Chromosome B"/>
</dbReference>
<dbReference type="GO" id="GO:0005759">
    <property type="term" value="C:mitochondrial matrix"/>
    <property type="evidence" value="ECO:0007669"/>
    <property type="project" value="UniProtKB-SubCell"/>
</dbReference>
<dbReference type="GO" id="GO:0042802">
    <property type="term" value="F:identical protein binding"/>
    <property type="evidence" value="ECO:0007669"/>
    <property type="project" value="TreeGrafter"/>
</dbReference>
<dbReference type="GO" id="GO:0003992">
    <property type="term" value="F:N2-acetyl-L-ornithine:2-oxoglutarate 5-aminotransferase activity"/>
    <property type="evidence" value="ECO:0007669"/>
    <property type="project" value="UniProtKB-EC"/>
</dbReference>
<dbReference type="GO" id="GO:0030170">
    <property type="term" value="F:pyridoxal phosphate binding"/>
    <property type="evidence" value="ECO:0007669"/>
    <property type="project" value="InterPro"/>
</dbReference>
<dbReference type="GO" id="GO:0042450">
    <property type="term" value="P:arginine biosynthetic process via ornithine"/>
    <property type="evidence" value="ECO:0007669"/>
    <property type="project" value="EnsemblFungi"/>
</dbReference>
<dbReference type="GO" id="GO:0006526">
    <property type="term" value="P:L-arginine biosynthetic process"/>
    <property type="evidence" value="ECO:0007669"/>
    <property type="project" value="UniProtKB-UniPathway"/>
</dbReference>
<dbReference type="CDD" id="cd00610">
    <property type="entry name" value="OAT_like"/>
    <property type="match status" value="1"/>
</dbReference>
<dbReference type="FunFam" id="3.40.640.10:FF:000004">
    <property type="entry name" value="Acetylornithine aminotransferase"/>
    <property type="match status" value="1"/>
</dbReference>
<dbReference type="Gene3D" id="3.90.1150.10">
    <property type="entry name" value="Aspartate Aminotransferase, domain 1"/>
    <property type="match status" value="1"/>
</dbReference>
<dbReference type="Gene3D" id="3.40.640.10">
    <property type="entry name" value="Type I PLP-dependent aspartate aminotransferase-like (Major domain)"/>
    <property type="match status" value="1"/>
</dbReference>
<dbReference type="HAMAP" id="MF_01107">
    <property type="entry name" value="ArgD_aminotrans_3"/>
    <property type="match status" value="1"/>
</dbReference>
<dbReference type="InterPro" id="IPR004636">
    <property type="entry name" value="AcOrn/SuccOrn_fam"/>
</dbReference>
<dbReference type="InterPro" id="IPR005814">
    <property type="entry name" value="Aminotrans_3"/>
</dbReference>
<dbReference type="InterPro" id="IPR049704">
    <property type="entry name" value="Aminotrans_3_PPA_site"/>
</dbReference>
<dbReference type="InterPro" id="IPR050103">
    <property type="entry name" value="Class-III_PLP-dep_AT"/>
</dbReference>
<dbReference type="InterPro" id="IPR015424">
    <property type="entry name" value="PyrdxlP-dep_Trfase"/>
</dbReference>
<dbReference type="InterPro" id="IPR015421">
    <property type="entry name" value="PyrdxlP-dep_Trfase_major"/>
</dbReference>
<dbReference type="InterPro" id="IPR015422">
    <property type="entry name" value="PyrdxlP-dep_Trfase_small"/>
</dbReference>
<dbReference type="NCBIfam" id="TIGR00707">
    <property type="entry name" value="argD"/>
    <property type="match status" value="1"/>
</dbReference>
<dbReference type="NCBIfam" id="NF002325">
    <property type="entry name" value="PRK01278.1"/>
    <property type="match status" value="1"/>
</dbReference>
<dbReference type="PANTHER" id="PTHR11986:SF79">
    <property type="entry name" value="ACETYLORNITHINE AMINOTRANSFERASE, MITOCHONDRIAL"/>
    <property type="match status" value="1"/>
</dbReference>
<dbReference type="PANTHER" id="PTHR11986">
    <property type="entry name" value="AMINOTRANSFERASE CLASS III"/>
    <property type="match status" value="1"/>
</dbReference>
<dbReference type="Pfam" id="PF00202">
    <property type="entry name" value="Aminotran_3"/>
    <property type="match status" value="1"/>
</dbReference>
<dbReference type="PIRSF" id="PIRSF000521">
    <property type="entry name" value="Transaminase_4ab_Lys_Orn"/>
    <property type="match status" value="1"/>
</dbReference>
<dbReference type="SUPFAM" id="SSF53383">
    <property type="entry name" value="PLP-dependent transferases"/>
    <property type="match status" value="1"/>
</dbReference>
<dbReference type="PROSITE" id="PS00600">
    <property type="entry name" value="AA_TRANSFER_CLASS_3"/>
    <property type="match status" value="1"/>
</dbReference>
<evidence type="ECO:0000250" key="1"/>
<evidence type="ECO:0000255" key="2"/>
<evidence type="ECO:0000305" key="3"/>